<dbReference type="EC" id="2.1.1.-" evidence="2"/>
<dbReference type="SMR" id="P9WEM8"/>
<dbReference type="iPTMnet" id="P9WEM8"/>
<dbReference type="OrthoDB" id="3149161at2759"/>
<dbReference type="GO" id="GO:0008168">
    <property type="term" value="F:methyltransferase activity"/>
    <property type="evidence" value="ECO:0007669"/>
    <property type="project" value="UniProtKB-KW"/>
</dbReference>
<dbReference type="GO" id="GO:0032259">
    <property type="term" value="P:methylation"/>
    <property type="evidence" value="ECO:0007669"/>
    <property type="project" value="UniProtKB-KW"/>
</dbReference>
<dbReference type="CDD" id="cd19916">
    <property type="entry name" value="OphMA_like"/>
    <property type="match status" value="1"/>
</dbReference>
<dbReference type="Gene3D" id="3.40.1010.10">
    <property type="entry name" value="Cobalt-precorrin-4 Transmethylase, Domain 1"/>
    <property type="match status" value="1"/>
</dbReference>
<dbReference type="InterPro" id="IPR000878">
    <property type="entry name" value="4pyrrol_Mease"/>
</dbReference>
<dbReference type="InterPro" id="IPR035996">
    <property type="entry name" value="4pyrrol_Methylase_sf"/>
</dbReference>
<dbReference type="InterPro" id="IPR014777">
    <property type="entry name" value="4pyrrole_Mease_sub1"/>
</dbReference>
<dbReference type="Pfam" id="PF00590">
    <property type="entry name" value="TP_methylase"/>
    <property type="match status" value="1"/>
</dbReference>
<dbReference type="SUPFAM" id="SSF53790">
    <property type="entry name" value="Tetrapyrrole methylase"/>
    <property type="match status" value="1"/>
</dbReference>
<protein>
    <recommendedName>
        <fullName evidence="3">Methyltransferase/ribosomally synthesized type I borosin cyclic peptide precursor sveMA</fullName>
    </recommendedName>
    <alternativeName>
        <fullName evidence="3">Type I borosin cyclic peptide biosynthesis cluster protein MA</fullName>
    </alternativeName>
    <component>
        <recommendedName>
            <fullName evidence="3">N-methyltranferase sveM</fullName>
            <ecNumber evidence="2">2.1.1.-</ecNumber>
        </recommendedName>
    </component>
    <component>
        <recommendedName>
            <fullName evidence="3">Ribosomally synthesized type I borosin core peptide</fullName>
        </recommendedName>
    </component>
</protein>
<evidence type="ECO:0000250" key="1">
    <source>
        <dbReference type="UniProtKB" id="A0A2R2JFI5"/>
    </source>
</evidence>
<evidence type="ECO:0000269" key="2">
    <source>
    </source>
</evidence>
<evidence type="ECO:0000303" key="3">
    <source>
    </source>
</evidence>
<evidence type="ECO:0000305" key="4"/>
<evidence type="ECO:0000305" key="5">
    <source>
    </source>
</evidence>
<name>SVEMA_SERVB</name>
<feature type="chain" id="PRO_0000458514" description="N-methyltranferase sveM" evidence="5">
    <location>
        <begin position="1"/>
        <end position="385"/>
    </location>
</feature>
<feature type="peptide" id="PRO_0000458515" description="Ribosomally synthesized type I borosin core peptide" evidence="5">
    <location>
        <begin position="386"/>
        <end position="408"/>
    </location>
</feature>
<feature type="region of interest" description="Methyltransferase domain" evidence="1">
    <location>
        <begin position="1"/>
        <end position="250"/>
    </location>
</feature>
<feature type="region of interest" description="Clasp domain" evidence="1">
    <location>
        <begin position="251"/>
        <end position="375"/>
    </location>
</feature>
<feature type="region of interest" description="Precursor leader" evidence="1">
    <location>
        <begin position="371"/>
        <end position="385"/>
    </location>
</feature>
<feature type="active site" evidence="1">
    <location>
        <position position="73"/>
    </location>
</feature>
<feature type="active site" evidence="1">
    <location>
        <position position="77"/>
    </location>
</feature>
<feature type="active site" evidence="1">
    <location>
        <position position="99"/>
    </location>
</feature>
<feature type="binding site" evidence="1">
    <location>
        <position position="99"/>
    </location>
    <ligand>
        <name>S-adenosyl-L-methionine</name>
        <dbReference type="ChEBI" id="CHEBI:59789"/>
    </ligand>
</feature>
<feature type="binding site" evidence="1">
    <location>
        <position position="101"/>
    </location>
    <ligand>
        <name>S-adenosyl-L-methionine</name>
        <dbReference type="ChEBI" id="CHEBI:59789"/>
    </ligand>
</feature>
<feature type="binding site" evidence="1">
    <location>
        <position position="104"/>
    </location>
    <ligand>
        <name>S-adenosyl-L-methionine</name>
        <dbReference type="ChEBI" id="CHEBI:59789"/>
    </ligand>
</feature>
<feature type="binding site" evidence="1">
    <location>
        <position position="131"/>
    </location>
    <ligand>
        <name>S-adenosyl-L-methionine</name>
        <dbReference type="ChEBI" id="CHEBI:59789"/>
    </ligand>
</feature>
<feature type="binding site" evidence="1">
    <location>
        <position position="173"/>
    </location>
    <ligand>
        <name>S-adenosyl-L-methionine</name>
        <dbReference type="ChEBI" id="CHEBI:59789"/>
    </ligand>
</feature>
<feature type="binding site" evidence="1">
    <location>
        <position position="211"/>
    </location>
    <ligand>
        <name>S-adenosyl-L-methionine</name>
        <dbReference type="ChEBI" id="CHEBI:59789"/>
    </ligand>
</feature>
<feature type="binding site" evidence="1">
    <location>
        <position position="242"/>
    </location>
    <ligand>
        <name>S-adenosyl-L-methionine</name>
        <dbReference type="ChEBI" id="CHEBI:59789"/>
    </ligand>
</feature>
<feature type="binding site" evidence="1">
    <location>
        <position position="244"/>
    </location>
    <ligand>
        <name>S-adenosyl-L-methionine</name>
        <dbReference type="ChEBI" id="CHEBI:59789"/>
    </ligand>
</feature>
<feature type="modified residue" description="N-methylvaline" evidence="2">
    <location>
        <position position="401"/>
    </location>
</feature>
<feature type="modified residue" description="N-methylisoleucine" evidence="2">
    <location>
        <position position="402"/>
    </location>
</feature>
<feature type="modified residue" description="N-methylvaline" evidence="2">
    <location>
        <position position="406"/>
    </location>
</feature>
<comment type="function">
    <text evidence="1 2">Fusion protein of the methyltransferase sveM and a type I borosin core peptide; part of the gene cluster that mediates the biosynthesis of a type I borosin, a highly methylated cyclic peptide with potent biological activities (PubMed:31117659). Type I borosins derive from the C-terminus of the fusion protein, and it is the same protein that methylates its own C-terminus using S-adenosyl methionine (SAM) (PubMed:31117659). The C-terminus is subsequently cleaved off and macrocyclized by a prolyloligopeptidase to give the final product (By similarity).</text>
</comment>
<comment type="pathway">
    <text evidence="5">Secondary metabolite biosynthesis.</text>
</comment>
<comment type="subunit">
    <text evidence="2">Homodimer.</text>
</comment>
<comment type="domain">
    <text evidence="5">Within the homodimer, the clasp domain wraps around the adjacent subunit to position the core peptide into the other subunit's active site for iterative intermolecular methylation.</text>
</comment>
<comment type="PTM">
    <text evidence="2 4">SveMA automethylates at Val-401, Ile-402 and Val-406 before being processed by a prolyloligopeptidase which likely forms a peptidyl ester upon removal of the follower propeptide, which then undergoes macrocyclization with the N-terminus of the modified core peptide (PubMed:31117659). Peptide backbone alpha-N-methylations change the physicochemical properties of amide bonds to provide structural constraints and other favorable characteristics including biological membrane permeability to peptides (Probable).</text>
</comment>
<comment type="similarity">
    <text evidence="4">In the N-terminal section; belongs to the precorrin methyltransferase family.</text>
</comment>
<organism>
    <name type="scientific">Serendipita vermifera subsp. bescii</name>
    <name type="common">Mycorrhizal fungus</name>
    <dbReference type="NCBI Taxonomy" id="109899"/>
    <lineage>
        <taxon>Eukaryota</taxon>
        <taxon>Fungi</taxon>
        <taxon>Dikarya</taxon>
        <taxon>Basidiomycota</taxon>
        <taxon>Agaricomycotina</taxon>
        <taxon>Agaricomycetes</taxon>
        <taxon>Sebacinales</taxon>
        <taxon>Serendipitaceae</taxon>
        <taxon>Serendipita</taxon>
    </lineage>
</organism>
<accession>P9WEM8</accession>
<keyword id="KW-0488">Methylation</keyword>
<keyword id="KW-0489">Methyltransferase</keyword>
<keyword id="KW-0949">S-adenosyl-L-methionine</keyword>
<keyword id="KW-0808">Transferase</keyword>
<proteinExistence type="evidence at protein level"/>
<reference key="1">
    <citation type="journal article" date="2019" name="J. Am. Chem. Soc.">
        <title>Distinct autocatalytic alpha-N-methylating precursors expand the borosin RiPP family of peptide natural products.</title>
        <authorList>
            <person name="Quijano M.R."/>
            <person name="Zach C."/>
            <person name="Miller F.S."/>
            <person name="Lee A.R."/>
            <person name="Imani A.S."/>
            <person name="Kuenzler M."/>
            <person name="Freeman M.F."/>
        </authorList>
    </citation>
    <scope>FUNCTION</scope>
    <scope>SUBUNIT</scope>
    <scope>CATALYTIC ACTIVITY</scope>
    <scope>DOMAIN</scope>
    <scope>METHYLATION AT VAL-401; ILE-402 AND VAL-406</scope>
</reference>
<sequence length="408" mass="44951">MASSTHPKRGSLTIAGTGIATLAHMTLETVSHIKEADKVYYIVTDPVTQAFIEENAKGPTFDLSVYYDADKYRYTSYVQMAEVMLNAVREGCNVLGLFYGHPGIFVSPSHRALAIAREEGYEARMLPGVSAEDYMFADLGLDPALPGCVCYEATNFLIRNKPLNPATHNILWQVGAVGITAMDFENSKFSLLVDRLERDLGPNHKVVHYVGAVLPQSATIMETYTIAELRKPEVIKRISTTSSTFYIPPRDSEAIDYDMVARLGIPPEKYRKIPSYPPNQWAGPNYTSTPAYGPEEKAAVSQLANHVVPNSYKTLHASPAMKKVMIDLATDRSLYKKYEANRDAFVDAVKGLTELEKVALKMGTDGSVYKVMSATQADIELGKEPSIEELEEGRGRLLLVVITAAVVV</sequence>